<evidence type="ECO:0000255" key="1">
    <source>
        <dbReference type="HAMAP-Rule" id="MF_00221"/>
    </source>
</evidence>
<comment type="function">
    <text evidence="1">H(+)-stimulated, divalent metal cation uptake system.</text>
</comment>
<comment type="subcellular location">
    <subcellularLocation>
        <location evidence="1">Cell inner membrane</location>
        <topology evidence="1">Multi-pass membrane protein</topology>
    </subcellularLocation>
</comment>
<comment type="similarity">
    <text evidence="1">Belongs to the NRAMP family.</text>
</comment>
<accession>B2TWY8</accession>
<reference key="1">
    <citation type="submission" date="2008-05" db="EMBL/GenBank/DDBJ databases">
        <title>Complete sequence of Shigella boydii serotype 18 strain BS512.</title>
        <authorList>
            <person name="Rasko D.A."/>
            <person name="Rosovitz M."/>
            <person name="Maurelli A.T."/>
            <person name="Myers G."/>
            <person name="Seshadri R."/>
            <person name="Cer R."/>
            <person name="Jiang L."/>
            <person name="Ravel J."/>
            <person name="Sebastian Y."/>
        </authorList>
    </citation>
    <scope>NUCLEOTIDE SEQUENCE [LARGE SCALE GENOMIC DNA]</scope>
    <source>
        <strain>CDC 3083-94 / BS512</strain>
    </source>
</reference>
<proteinExistence type="inferred from homology"/>
<gene>
    <name evidence="1" type="primary">mntH</name>
    <name type="ordered locus">SbBS512_E2760</name>
</gene>
<feature type="chain" id="PRO_1000100092" description="Divalent metal cation transporter MntH">
    <location>
        <begin position="1"/>
        <end position="412"/>
    </location>
</feature>
<feature type="topological domain" description="Cytoplasmic" evidence="1">
    <location>
        <begin position="1"/>
        <end position="19"/>
    </location>
</feature>
<feature type="transmembrane region" description="Helical" evidence="1">
    <location>
        <begin position="20"/>
        <end position="39"/>
    </location>
</feature>
<feature type="topological domain" description="Periplasmic" evidence="1">
    <location>
        <begin position="40"/>
        <end position="51"/>
    </location>
</feature>
<feature type="transmembrane region" description="Helical" evidence="1">
    <location>
        <begin position="52"/>
        <end position="71"/>
    </location>
</feature>
<feature type="topological domain" description="Cytoplasmic" evidence="1">
    <location>
        <begin position="72"/>
        <end position="95"/>
    </location>
</feature>
<feature type="transmembrane region" description="Helical" evidence="1">
    <location>
        <begin position="96"/>
        <end position="118"/>
    </location>
</feature>
<feature type="topological domain" description="Periplasmic" evidence="1">
    <location>
        <begin position="119"/>
        <end position="125"/>
    </location>
</feature>
<feature type="transmembrane region" description="Helical" evidence="1">
    <location>
        <begin position="126"/>
        <end position="145"/>
    </location>
</feature>
<feature type="topological domain" description="Cytoplasmic" evidence="1">
    <location>
        <begin position="146"/>
        <end position="155"/>
    </location>
</feature>
<feature type="transmembrane region" description="Helical" evidence="1">
    <location>
        <begin position="156"/>
        <end position="175"/>
    </location>
</feature>
<feature type="topological domain" description="Periplasmic" evidence="1">
    <location>
        <begin position="176"/>
        <end position="196"/>
    </location>
</feature>
<feature type="transmembrane region" description="Helical" evidence="1">
    <location>
        <begin position="197"/>
        <end position="220"/>
    </location>
</feature>
<feature type="topological domain" description="Cytoplasmic" evidence="1">
    <location>
        <begin position="221"/>
        <end position="238"/>
    </location>
</feature>
<feature type="transmembrane region" description="Helical" evidence="1">
    <location>
        <begin position="239"/>
        <end position="258"/>
    </location>
</feature>
<feature type="topological domain" description="Periplasmic" evidence="1">
    <location>
        <begin position="259"/>
        <end position="276"/>
    </location>
</feature>
<feature type="transmembrane region" description="Helical" evidence="1">
    <location>
        <begin position="277"/>
        <end position="297"/>
    </location>
</feature>
<feature type="topological domain" description="Cytoplasmic" evidence="1">
    <location>
        <begin position="298"/>
        <end position="327"/>
    </location>
</feature>
<feature type="transmembrane region" description="Helical" evidence="1">
    <location>
        <begin position="328"/>
        <end position="344"/>
    </location>
</feature>
<feature type="topological domain" description="Periplasmic" evidence="1">
    <location>
        <begin position="345"/>
        <end position="350"/>
    </location>
</feature>
<feature type="transmembrane region" description="Helical" evidence="1">
    <location>
        <begin position="351"/>
        <end position="370"/>
    </location>
</feature>
<feature type="topological domain" description="Cytoplasmic" evidence="1">
    <location>
        <begin position="371"/>
        <end position="387"/>
    </location>
</feature>
<feature type="transmembrane region" description="Helical" evidence="1">
    <location>
        <begin position="388"/>
        <end position="406"/>
    </location>
</feature>
<feature type="topological domain" description="Periplasmic" evidence="1">
    <location>
        <begin position="407"/>
        <end position="412"/>
    </location>
</feature>
<name>MNTH_SHIB3</name>
<organism>
    <name type="scientific">Shigella boydii serotype 18 (strain CDC 3083-94 / BS512)</name>
    <dbReference type="NCBI Taxonomy" id="344609"/>
    <lineage>
        <taxon>Bacteria</taxon>
        <taxon>Pseudomonadati</taxon>
        <taxon>Pseudomonadota</taxon>
        <taxon>Gammaproteobacteria</taxon>
        <taxon>Enterobacterales</taxon>
        <taxon>Enterobacteriaceae</taxon>
        <taxon>Shigella</taxon>
    </lineage>
</organism>
<protein>
    <recommendedName>
        <fullName evidence="1">Divalent metal cation transporter MntH</fullName>
    </recommendedName>
</protein>
<sequence length="412" mass="44194">MTNYRVESSSGRAARKMRLALMGPAFIAAIGYIDPGNFATNIQAGASFGYQLLWVVVWANLMAMLIQILSAKLGIATGKNLAEQIRDHYPRPVVWFYWVQAEIIAMATDLAEFIGAAIGFKLILGVSLLQGAVLTGIATFLILMLQRRGQKPLEKVIGGLLLFVAAAYIVELIFSQPNLAQLGKGMVIPSLPTSEAVFLAAGVLGATIMPHVIYLHSSLTQHLHGGSRQQRYSATKWDVAIAMTIAGFVNLAMMATAAAAFHFSGHTGVADLDEAYLTLQPLLSHAAATVFGLSLVAAGLSSTVVGTLAGQVVMQGFIRFHIPLWVRRTVTMLPSFIVILMGLDPTRILVMSQVLLSFGIALALVPLLIFTSDSKLMGDLVNSKRVKQTGWVIVVLVVALNIWLLVGTALGL</sequence>
<dbReference type="EMBL" id="CP001063">
    <property type="protein sequence ID" value="ACD08057.1"/>
    <property type="molecule type" value="Genomic_DNA"/>
</dbReference>
<dbReference type="RefSeq" id="WP_000186369.1">
    <property type="nucleotide sequence ID" value="NC_010658.1"/>
</dbReference>
<dbReference type="SMR" id="B2TWY8"/>
<dbReference type="STRING" id="344609.SbBS512_E2760"/>
<dbReference type="KEGG" id="sbc:SbBS512_E2760"/>
<dbReference type="HOGENOM" id="CLU_020088_2_0_6"/>
<dbReference type="Proteomes" id="UP000001030">
    <property type="component" value="Chromosome"/>
</dbReference>
<dbReference type="GO" id="GO:0005886">
    <property type="term" value="C:plasma membrane"/>
    <property type="evidence" value="ECO:0007669"/>
    <property type="project" value="UniProtKB-SubCell"/>
</dbReference>
<dbReference type="GO" id="GO:0015086">
    <property type="term" value="F:cadmium ion transmembrane transporter activity"/>
    <property type="evidence" value="ECO:0007669"/>
    <property type="project" value="TreeGrafter"/>
</dbReference>
<dbReference type="GO" id="GO:0005384">
    <property type="term" value="F:manganese ion transmembrane transporter activity"/>
    <property type="evidence" value="ECO:0007669"/>
    <property type="project" value="TreeGrafter"/>
</dbReference>
<dbReference type="GO" id="GO:0046872">
    <property type="term" value="F:metal ion binding"/>
    <property type="evidence" value="ECO:0007669"/>
    <property type="project" value="UniProtKB-UniRule"/>
</dbReference>
<dbReference type="GO" id="GO:0015293">
    <property type="term" value="F:symporter activity"/>
    <property type="evidence" value="ECO:0007669"/>
    <property type="project" value="UniProtKB-UniRule"/>
</dbReference>
<dbReference type="GO" id="GO:0034755">
    <property type="term" value="P:iron ion transmembrane transport"/>
    <property type="evidence" value="ECO:0007669"/>
    <property type="project" value="TreeGrafter"/>
</dbReference>
<dbReference type="HAMAP" id="MF_00221">
    <property type="entry name" value="NRAMP"/>
    <property type="match status" value="1"/>
</dbReference>
<dbReference type="InterPro" id="IPR001046">
    <property type="entry name" value="NRAMP_fam"/>
</dbReference>
<dbReference type="NCBIfam" id="TIGR01197">
    <property type="entry name" value="nramp"/>
    <property type="match status" value="1"/>
</dbReference>
<dbReference type="NCBIfam" id="NF037982">
    <property type="entry name" value="Nramp_1"/>
    <property type="match status" value="1"/>
</dbReference>
<dbReference type="NCBIfam" id="NF001923">
    <property type="entry name" value="PRK00701.1"/>
    <property type="match status" value="1"/>
</dbReference>
<dbReference type="PANTHER" id="PTHR11706:SF33">
    <property type="entry name" value="NATURAL RESISTANCE-ASSOCIATED MACROPHAGE PROTEIN 2"/>
    <property type="match status" value="1"/>
</dbReference>
<dbReference type="PANTHER" id="PTHR11706">
    <property type="entry name" value="SOLUTE CARRIER PROTEIN FAMILY 11 MEMBER"/>
    <property type="match status" value="1"/>
</dbReference>
<dbReference type="Pfam" id="PF01566">
    <property type="entry name" value="Nramp"/>
    <property type="match status" value="1"/>
</dbReference>
<dbReference type="PRINTS" id="PR00447">
    <property type="entry name" value="NATRESASSCMP"/>
</dbReference>
<keyword id="KW-0997">Cell inner membrane</keyword>
<keyword id="KW-1003">Cell membrane</keyword>
<keyword id="KW-0406">Ion transport</keyword>
<keyword id="KW-0472">Membrane</keyword>
<keyword id="KW-1185">Reference proteome</keyword>
<keyword id="KW-0769">Symport</keyword>
<keyword id="KW-0812">Transmembrane</keyword>
<keyword id="KW-1133">Transmembrane helix</keyword>
<keyword id="KW-0813">Transport</keyword>